<comment type="function">
    <text evidence="4">Snake venom phospholipase A2 (PLA2) that exhibits high hydrolytic activities and shows strong preference for the anionic micelles (dPPC with deoxycholate) to the zwitterionic micelles (dPPC with Triton X-100). PLA2 catalyzes the calcium-dependent hydrolysis of the 2-acyl groups in 3-sn-phosphoglycerides.</text>
</comment>
<comment type="catalytic activity">
    <reaction evidence="2 3">
        <text>a 1,2-diacyl-sn-glycero-3-phosphocholine + H2O = a 1-acyl-sn-glycero-3-phosphocholine + a fatty acid + H(+)</text>
        <dbReference type="Rhea" id="RHEA:15801"/>
        <dbReference type="ChEBI" id="CHEBI:15377"/>
        <dbReference type="ChEBI" id="CHEBI:15378"/>
        <dbReference type="ChEBI" id="CHEBI:28868"/>
        <dbReference type="ChEBI" id="CHEBI:57643"/>
        <dbReference type="ChEBI" id="CHEBI:58168"/>
        <dbReference type="EC" id="3.1.1.4"/>
    </reaction>
</comment>
<comment type="cofactor">
    <cofactor evidence="1">
        <name>Ca(2+)</name>
        <dbReference type="ChEBI" id="CHEBI:29108"/>
    </cofactor>
    <text evidence="1">Binds 1 Ca(2+) ion.</text>
</comment>
<comment type="subcellular location">
    <subcellularLocation>
        <location>Secreted</location>
    </subcellularLocation>
</comment>
<comment type="tissue specificity">
    <text>Expressed by the venom gland.</text>
</comment>
<comment type="mass spectrometry" mass="13573.0" method="Electrospray" evidence="4">
    <text>in Drk-a1.</text>
</comment>
<comment type="mass spectrometry" mass="13812.0" method="Electrospray" evidence="4">
    <text>in Drk-a1' which has only its protein sequence AA 17-27 sequenced.</text>
</comment>
<comment type="similarity">
    <text evidence="5">Belongs to the phospholipase A2 family. Group II subfamily. D49 sub-subfamily.</text>
</comment>
<organism>
    <name type="scientific">Daboia russelii</name>
    <name type="common">Russel's viper</name>
    <name type="synonym">Vipera russelii</name>
    <dbReference type="NCBI Taxonomy" id="8707"/>
    <lineage>
        <taxon>Eukaryota</taxon>
        <taxon>Metazoa</taxon>
        <taxon>Chordata</taxon>
        <taxon>Craniata</taxon>
        <taxon>Vertebrata</taxon>
        <taxon>Euteleostomi</taxon>
        <taxon>Lepidosauria</taxon>
        <taxon>Squamata</taxon>
        <taxon>Bifurcata</taxon>
        <taxon>Unidentata</taxon>
        <taxon>Episquamata</taxon>
        <taxon>Toxicofera</taxon>
        <taxon>Serpentes</taxon>
        <taxon>Colubroidea</taxon>
        <taxon>Viperidae</taxon>
        <taxon>Viperinae</taxon>
        <taxon>Daboia</taxon>
    </lineage>
</organism>
<accession>A8CG86</accession>
<accession>Q2ES54</accession>
<name>PA2A1_DABRR</name>
<feature type="signal peptide" evidence="4">
    <location>
        <begin position="1"/>
        <end position="16"/>
    </location>
</feature>
<feature type="chain" id="PRO_0000419215" description="Acidic phospholipase A2 Drk-a1">
    <location>
        <begin position="17"/>
        <end position="138"/>
    </location>
</feature>
<feature type="active site" evidence="1">
    <location>
        <position position="63"/>
    </location>
</feature>
<feature type="active site" evidence="1">
    <location>
        <position position="105"/>
    </location>
</feature>
<feature type="binding site" evidence="1">
    <location>
        <position position="43"/>
    </location>
    <ligand>
        <name>Ca(2+)</name>
        <dbReference type="ChEBI" id="CHEBI:29108"/>
    </ligand>
</feature>
<feature type="binding site" evidence="1">
    <location>
        <position position="45"/>
    </location>
    <ligand>
        <name>Ca(2+)</name>
        <dbReference type="ChEBI" id="CHEBI:29108"/>
    </ligand>
</feature>
<feature type="binding site" evidence="1">
    <location>
        <position position="47"/>
    </location>
    <ligand>
        <name>Ca(2+)</name>
        <dbReference type="ChEBI" id="CHEBI:29108"/>
    </ligand>
</feature>
<feature type="binding site" evidence="1">
    <location>
        <position position="64"/>
    </location>
    <ligand>
        <name>Ca(2+)</name>
        <dbReference type="ChEBI" id="CHEBI:29108"/>
    </ligand>
</feature>
<feature type="disulfide bond" evidence="1">
    <location>
        <begin position="42"/>
        <end position="131"/>
    </location>
</feature>
<feature type="disulfide bond" evidence="1">
    <location>
        <begin position="44"/>
        <end position="60"/>
    </location>
</feature>
<feature type="disulfide bond" evidence="1">
    <location>
        <begin position="59"/>
        <end position="111"/>
    </location>
</feature>
<feature type="disulfide bond" evidence="1">
    <location>
        <begin position="65"/>
        <end position="138"/>
    </location>
</feature>
<feature type="disulfide bond" evidence="1">
    <location>
        <begin position="66"/>
        <end position="104"/>
    </location>
</feature>
<feature type="disulfide bond" evidence="1">
    <location>
        <begin position="73"/>
        <end position="97"/>
    </location>
</feature>
<feature type="disulfide bond" evidence="1">
    <location>
        <begin position="91"/>
        <end position="102"/>
    </location>
</feature>
<feature type="sequence variant" description="In Drk-a1'.">
    <original>L</original>
    <variation>F</variation>
    <location>
        <position position="18"/>
    </location>
</feature>
<sequence length="138" mass="15329">MRTLWIVAVCLIGVEGNLFQFAEMIVKMTGKEAVHSYAIYGCYCGWGGQGKPQDATDRCCFVHDCCYGTVNDCNPKMATYSYSFENGDIVCGDNNLCLKTVCECDRAAAICLGQNVNTYDKNYENYAISHCTEESEQC</sequence>
<keyword id="KW-0106">Calcium</keyword>
<keyword id="KW-0903">Direct protein sequencing</keyword>
<keyword id="KW-1015">Disulfide bond</keyword>
<keyword id="KW-0378">Hydrolase</keyword>
<keyword id="KW-0442">Lipid degradation</keyword>
<keyword id="KW-0443">Lipid metabolism</keyword>
<keyword id="KW-0479">Metal-binding</keyword>
<keyword id="KW-0964">Secreted</keyword>
<keyword id="KW-0732">Signal</keyword>
<keyword id="KW-0800">Toxin</keyword>
<reference key="1">
    <citation type="journal article" date="2007" name="Biochim. Biophys. Acta">
        <title>Venom phospholipases of Russell's vipers from Myanmar and eastern India--cloning, characterization and phylogeographic analysis.</title>
        <authorList>
            <person name="Tsai I.-H."/>
            <person name="Tsai H.-Y."/>
            <person name="Wang Y.-M."/>
            <person name="Pe T."/>
            <person name="Warrell D.-A."/>
        </authorList>
    </citation>
    <scope>NUCLEOTIDE SEQUENCE [MRNA]</scope>
    <scope>PROTEIN SEQUENCE OF 17-27</scope>
    <scope>FUNCTION</scope>
    <scope>MASS SPECTROMETRY</scope>
    <source>
        <strain>Eastern India</strain>
        <tissue>Venom</tissue>
        <tissue>Venom gland</tissue>
    </source>
</reference>
<reference key="2">
    <citation type="submission" date="2006-01" db="EMBL/GenBank/DDBJ databases">
        <title>A survey of Daboia russelii venom gland transcripts (cDNA): unraveling the venom proteins and peptides.</title>
        <authorList>
            <person name="Madhukumar A.V."/>
            <person name="Reza M.A."/>
            <person name="Gowda T.V."/>
            <person name="Kini R.M."/>
        </authorList>
    </citation>
    <scope>NUCLEOTIDE SEQUENCE [MRNA]</scope>
    <source>
        <tissue>Venom gland</tissue>
    </source>
</reference>
<proteinExistence type="evidence at protein level"/>
<evidence type="ECO:0000250" key="1"/>
<evidence type="ECO:0000255" key="2">
    <source>
        <dbReference type="PROSITE-ProRule" id="PRU10035"/>
    </source>
</evidence>
<evidence type="ECO:0000255" key="3">
    <source>
        <dbReference type="PROSITE-ProRule" id="PRU10036"/>
    </source>
</evidence>
<evidence type="ECO:0000269" key="4">
    <source>
    </source>
</evidence>
<evidence type="ECO:0000305" key="5"/>
<protein>
    <recommendedName>
        <fullName>Acidic phospholipase A2 Drk-a1</fullName>
        <shortName>svPLA2</shortName>
        <ecNumber>3.1.1.4</ecNumber>
    </recommendedName>
    <alternativeName>
        <fullName>Phosphatidylcholine 2-acylhydrolase</fullName>
    </alternativeName>
    <alternativeName>
        <fullName>Phospholipase A2 Drk-a1'</fullName>
    </alternativeName>
    <alternativeName>
        <fullName>Phospholipase A2-I</fullName>
    </alternativeName>
</protein>
<dbReference type="EC" id="3.1.1.4"/>
<dbReference type="EMBL" id="DQ090658">
    <property type="protein sequence ID" value="AAZ53180.1"/>
    <property type="molecule type" value="mRNA"/>
</dbReference>
<dbReference type="EMBL" id="DQ365974">
    <property type="protein sequence ID" value="ABD24036.1"/>
    <property type="molecule type" value="mRNA"/>
</dbReference>
<dbReference type="SMR" id="A8CG86"/>
<dbReference type="GO" id="GO:0005576">
    <property type="term" value="C:extracellular region"/>
    <property type="evidence" value="ECO:0007669"/>
    <property type="project" value="UniProtKB-SubCell"/>
</dbReference>
<dbReference type="GO" id="GO:0005509">
    <property type="term" value="F:calcium ion binding"/>
    <property type="evidence" value="ECO:0007669"/>
    <property type="project" value="InterPro"/>
</dbReference>
<dbReference type="GO" id="GO:0047498">
    <property type="term" value="F:calcium-dependent phospholipase A2 activity"/>
    <property type="evidence" value="ECO:0007669"/>
    <property type="project" value="TreeGrafter"/>
</dbReference>
<dbReference type="GO" id="GO:0005543">
    <property type="term" value="F:phospholipid binding"/>
    <property type="evidence" value="ECO:0007669"/>
    <property type="project" value="TreeGrafter"/>
</dbReference>
<dbReference type="GO" id="GO:0090729">
    <property type="term" value="F:toxin activity"/>
    <property type="evidence" value="ECO:0007669"/>
    <property type="project" value="UniProtKB-KW"/>
</dbReference>
<dbReference type="GO" id="GO:0050482">
    <property type="term" value="P:arachidonate secretion"/>
    <property type="evidence" value="ECO:0007669"/>
    <property type="project" value="InterPro"/>
</dbReference>
<dbReference type="GO" id="GO:0016042">
    <property type="term" value="P:lipid catabolic process"/>
    <property type="evidence" value="ECO:0007669"/>
    <property type="project" value="UniProtKB-KW"/>
</dbReference>
<dbReference type="GO" id="GO:0042130">
    <property type="term" value="P:negative regulation of T cell proliferation"/>
    <property type="evidence" value="ECO:0007669"/>
    <property type="project" value="TreeGrafter"/>
</dbReference>
<dbReference type="GO" id="GO:0006644">
    <property type="term" value="P:phospholipid metabolic process"/>
    <property type="evidence" value="ECO:0007669"/>
    <property type="project" value="InterPro"/>
</dbReference>
<dbReference type="CDD" id="cd00125">
    <property type="entry name" value="PLA2c"/>
    <property type="match status" value="1"/>
</dbReference>
<dbReference type="FunFam" id="1.20.90.10:FF:000001">
    <property type="entry name" value="Basic phospholipase A2 homolog"/>
    <property type="match status" value="1"/>
</dbReference>
<dbReference type="Gene3D" id="1.20.90.10">
    <property type="entry name" value="Phospholipase A2 domain"/>
    <property type="match status" value="1"/>
</dbReference>
<dbReference type="InterPro" id="IPR001211">
    <property type="entry name" value="PLipase_A2"/>
</dbReference>
<dbReference type="InterPro" id="IPR033112">
    <property type="entry name" value="PLipase_A2_Asp_AS"/>
</dbReference>
<dbReference type="InterPro" id="IPR016090">
    <property type="entry name" value="PLipase_A2_dom"/>
</dbReference>
<dbReference type="InterPro" id="IPR036444">
    <property type="entry name" value="PLipase_A2_dom_sf"/>
</dbReference>
<dbReference type="InterPro" id="IPR033113">
    <property type="entry name" value="PLipase_A2_His_AS"/>
</dbReference>
<dbReference type="PANTHER" id="PTHR11716">
    <property type="entry name" value="PHOSPHOLIPASE A2 FAMILY MEMBER"/>
    <property type="match status" value="1"/>
</dbReference>
<dbReference type="PANTHER" id="PTHR11716:SF9">
    <property type="entry name" value="PHOSPHOLIPASE A2, MEMBRANE ASSOCIATED"/>
    <property type="match status" value="1"/>
</dbReference>
<dbReference type="Pfam" id="PF00068">
    <property type="entry name" value="Phospholip_A2_1"/>
    <property type="match status" value="1"/>
</dbReference>
<dbReference type="PRINTS" id="PR00389">
    <property type="entry name" value="PHPHLIPASEA2"/>
</dbReference>
<dbReference type="SMART" id="SM00085">
    <property type="entry name" value="PA2c"/>
    <property type="match status" value="1"/>
</dbReference>
<dbReference type="SUPFAM" id="SSF48619">
    <property type="entry name" value="Phospholipase A2, PLA2"/>
    <property type="match status" value="1"/>
</dbReference>
<dbReference type="PROSITE" id="PS00119">
    <property type="entry name" value="PA2_ASP"/>
    <property type="match status" value="1"/>
</dbReference>
<dbReference type="PROSITE" id="PS00118">
    <property type="entry name" value="PA2_HIS"/>
    <property type="match status" value="1"/>
</dbReference>